<reference key="1">
    <citation type="journal article" date="2007" name="Peptides">
        <title>An O-conotoxin from the vermivorous Conus spurius active on mice and mollusks.</title>
        <authorList>
            <person name="Luna-Ramirez K.S."/>
            <person name="Aguilar M.B."/>
            <person name="Falcon A."/>
            <person name="Heimer de la Cotera E.P."/>
            <person name="Olivera B.M."/>
            <person name="Maillo M."/>
        </authorList>
    </citation>
    <scope>PROTEIN SEQUENCE</scope>
    <scope>SUBCELLULAR LOCATION</scope>
    <scope>TISSUE SPECIFICITY</scope>
    <scope>AMIDATION AT SER-32</scope>
    <scope>MASS SPECTROMETRY</scope>
    <source>
        <tissue>Venom</tissue>
    </source>
</reference>
<proteinExistence type="evidence at protein level"/>
<accession>P0C352</accession>
<sequence>CLQFGSTCFLGDDDICCSGECFYSGGTFGICS</sequence>
<protein>
    <recommendedName>
        <fullName>Conotoxin sr7a</fullName>
    </recommendedName>
</protein>
<name>U6A_CONSP</name>
<dbReference type="SMR" id="P0C352"/>
<dbReference type="ConoServer" id="1450">
    <property type="toxin name" value="SrVIIA"/>
</dbReference>
<dbReference type="GO" id="GO:0005576">
    <property type="term" value="C:extracellular region"/>
    <property type="evidence" value="ECO:0007669"/>
    <property type="project" value="UniProtKB-SubCell"/>
</dbReference>
<dbReference type="GO" id="GO:0090729">
    <property type="term" value="F:toxin activity"/>
    <property type="evidence" value="ECO:0007669"/>
    <property type="project" value="UniProtKB-KW"/>
</dbReference>
<comment type="function">
    <text>Elicits hyperactivity when injected intracranially into mice and produces paralysis when injected into the pedal muscle of freshwater snails, Pomacea paludosa, but it has no apparent effect after intramuscular injection into the limpet Patella opea or the freshwater fish Lebistes reticulatus.</text>
</comment>
<comment type="subcellular location">
    <subcellularLocation>
        <location evidence="2">Secreted</location>
    </subcellularLocation>
</comment>
<comment type="tissue specificity">
    <text evidence="2">Expressed by the venom duct.</text>
</comment>
<comment type="domain">
    <text evidence="3">The presence of a 'disulfide through disulfide knot' structurally defines this protein as a knottin.</text>
</comment>
<comment type="domain">
    <text>The cysteine framework is VI/VII (C-C-CC-C-C).</text>
</comment>
<comment type="mass spectrometry"/>
<organism>
    <name type="scientific">Conus spurius</name>
    <name type="common">Alphabet cone</name>
    <dbReference type="NCBI Taxonomy" id="192919"/>
    <lineage>
        <taxon>Eukaryota</taxon>
        <taxon>Metazoa</taxon>
        <taxon>Spiralia</taxon>
        <taxon>Lophotrochozoa</taxon>
        <taxon>Mollusca</taxon>
        <taxon>Gastropoda</taxon>
        <taxon>Caenogastropoda</taxon>
        <taxon>Neogastropoda</taxon>
        <taxon>Conoidea</taxon>
        <taxon>Conidae</taxon>
        <taxon>Conus</taxon>
        <taxon>Lindaconus</taxon>
    </lineage>
</organism>
<keyword id="KW-0027">Amidation</keyword>
<keyword id="KW-0903">Direct protein sequencing</keyword>
<keyword id="KW-1015">Disulfide bond</keyword>
<keyword id="KW-0960">Knottin</keyword>
<keyword id="KW-0528">Neurotoxin</keyword>
<keyword id="KW-0964">Secreted</keyword>
<keyword id="KW-0800">Toxin</keyword>
<feature type="peptide" id="PRO_0000288947" description="Conotoxin sr7a">
    <location>
        <begin position="1"/>
        <end position="32"/>
    </location>
</feature>
<feature type="modified residue" description="Serine amide" evidence="2">
    <location>
        <position position="32"/>
    </location>
</feature>
<feature type="disulfide bond" evidence="1">
    <location>
        <begin position="1"/>
        <end position="17"/>
    </location>
</feature>
<feature type="disulfide bond" evidence="1">
    <location>
        <begin position="8"/>
        <end position="21"/>
    </location>
</feature>
<feature type="disulfide bond" evidence="1">
    <location>
        <begin position="16"/>
        <end position="31"/>
    </location>
</feature>
<evidence type="ECO:0000250" key="1"/>
<evidence type="ECO:0000269" key="2">
    <source>
    </source>
</evidence>
<evidence type="ECO:0000305" key="3"/>